<evidence type="ECO:0000250" key="1"/>
<evidence type="ECO:0000250" key="2">
    <source>
        <dbReference type="UniProtKB" id="P55057"/>
    </source>
</evidence>
<evidence type="ECO:0000305" key="3"/>
<feature type="signal peptide" evidence="2">
    <location>
        <begin position="1"/>
        <end position="27"/>
    </location>
</feature>
<feature type="chain" id="PRO_0000420990" description="Apolipoprotein C-IV">
    <location>
        <begin position="28"/>
        <end position="125"/>
    </location>
</feature>
<accession>P0DKW3</accession>
<sequence length="125" mass="14600">MSLLRQRLQALPVLCLCVLVLACIGACQSEAYEGTPSPPPEQKMSRWNLVQSRMKELLEPAVTRTRDRWQWLWSLSTFRGFMQTYYDDHLRDLGPRTKTWLLESKDSLLNKTYSLCPRLLCAHKN</sequence>
<protein>
    <recommendedName>
        <fullName>Apolipoprotein C-IV</fullName>
        <shortName>Apo-CIV</shortName>
        <shortName>ApoC-IV</shortName>
    </recommendedName>
    <alternativeName>
        <fullName>Apolipoprotein C4</fullName>
    </alternativeName>
</protein>
<reference key="1">
    <citation type="submission" date="2006-07" db="EMBL/GenBank/DDBJ databases">
        <authorList>
            <person name="Cheng J.-F."/>
            <person name="Hamilton M."/>
            <person name="Peng Y."/>
            <person name="Hosseini R."/>
            <person name="Peng Z."/>
            <person name="Malinov I."/>
            <person name="Rubin E.M."/>
        </authorList>
    </citation>
    <scope>NUCLEOTIDE SEQUENCE [LARGE SCALE GENOMIC DNA]</scope>
</reference>
<reference key="2">
    <citation type="unpublished observations" date="2012-11">
        <authorList>
            <person name="Puppione D.L."/>
        </authorList>
    </citation>
    <scope>IDENTIFICATION</scope>
</reference>
<gene>
    <name type="primary">APOC4</name>
</gene>
<dbReference type="EMBL" id="AC146285">
    <property type="status" value="NOT_ANNOTATED_CDS"/>
    <property type="molecule type" value="Genomic_DNA"/>
</dbReference>
<dbReference type="GO" id="GO:0034364">
    <property type="term" value="C:high-density lipoprotein particle"/>
    <property type="evidence" value="ECO:0007669"/>
    <property type="project" value="TreeGrafter"/>
</dbReference>
<dbReference type="GO" id="GO:0034361">
    <property type="term" value="C:very-low-density lipoprotein particle"/>
    <property type="evidence" value="ECO:0007669"/>
    <property type="project" value="TreeGrafter"/>
</dbReference>
<dbReference type="GO" id="GO:0006869">
    <property type="term" value="P:lipid transport"/>
    <property type="evidence" value="ECO:0007669"/>
    <property type="project" value="UniProtKB-KW"/>
</dbReference>
<dbReference type="GO" id="GO:0010890">
    <property type="term" value="P:positive regulation of triglyceride storage"/>
    <property type="evidence" value="ECO:0007669"/>
    <property type="project" value="TreeGrafter"/>
</dbReference>
<dbReference type="GO" id="GO:0070328">
    <property type="term" value="P:triglyceride homeostasis"/>
    <property type="evidence" value="ECO:0007669"/>
    <property type="project" value="TreeGrafter"/>
</dbReference>
<dbReference type="InterPro" id="IPR028120">
    <property type="entry name" value="APOC4"/>
</dbReference>
<dbReference type="PANTHER" id="PTHR32288">
    <property type="entry name" value="APOLIPOPROTEIN C-IV"/>
    <property type="match status" value="1"/>
</dbReference>
<dbReference type="PANTHER" id="PTHR32288:SF0">
    <property type="entry name" value="APOLIPOPROTEIN C-IV"/>
    <property type="match status" value="1"/>
</dbReference>
<dbReference type="Pfam" id="PF15119">
    <property type="entry name" value="APOC4"/>
    <property type="match status" value="1"/>
</dbReference>
<name>APOC4_PLEMO</name>
<organism>
    <name type="scientific">Plecturocebus moloch</name>
    <name type="common">Dusky titi monkey</name>
    <name type="synonym">Callicebus moloch</name>
    <dbReference type="NCBI Taxonomy" id="9523"/>
    <lineage>
        <taxon>Eukaryota</taxon>
        <taxon>Metazoa</taxon>
        <taxon>Chordata</taxon>
        <taxon>Craniata</taxon>
        <taxon>Vertebrata</taxon>
        <taxon>Euteleostomi</taxon>
        <taxon>Mammalia</taxon>
        <taxon>Eutheria</taxon>
        <taxon>Euarchontoglires</taxon>
        <taxon>Primates</taxon>
        <taxon>Haplorrhini</taxon>
        <taxon>Platyrrhini</taxon>
        <taxon>Pitheciidae</taxon>
        <taxon>Callicebinae</taxon>
        <taxon>Plecturocebus</taxon>
    </lineage>
</organism>
<comment type="function">
    <text evidence="1">May participate in lipoprotein metabolism.</text>
</comment>
<comment type="subcellular location">
    <subcellularLocation>
        <location evidence="1">Secreted</location>
    </subcellularLocation>
</comment>
<comment type="similarity">
    <text evidence="3">Belongs to the apolipoprotein C4 family.</text>
</comment>
<proteinExistence type="inferred from homology"/>
<keyword id="KW-0445">Lipid transport</keyword>
<keyword id="KW-0964">Secreted</keyword>
<keyword id="KW-0732">Signal</keyword>
<keyword id="KW-0813">Transport</keyword>